<feature type="chain" id="PRO_0000333032" description="Sphingosine kinase 1">
    <location>
        <begin position="1"/>
        <end position="382"/>
    </location>
</feature>
<feature type="domain" description="DAGKc" evidence="3">
    <location>
        <begin position="12"/>
        <end position="159"/>
    </location>
</feature>
<feature type="short sequence motif" description="Nuclear export signal 1" evidence="2">
    <location>
        <begin position="147"/>
        <end position="155"/>
    </location>
</feature>
<feature type="short sequence motif" description="Nuclear export signal 2" evidence="2">
    <location>
        <begin position="161"/>
        <end position="169"/>
    </location>
</feature>
<feature type="active site" description="Proton donor/acceptor" evidence="2">
    <location>
        <position position="81"/>
    </location>
</feature>
<feature type="binding site" evidence="3">
    <location>
        <begin position="22"/>
        <end position="24"/>
    </location>
    <ligand>
        <name>ATP</name>
        <dbReference type="ChEBI" id="CHEBI:30616"/>
    </ligand>
</feature>
<feature type="binding site" evidence="3">
    <location>
        <begin position="54"/>
        <end position="58"/>
    </location>
    <ligand>
        <name>ATP</name>
        <dbReference type="ChEBI" id="CHEBI:30616"/>
    </ligand>
</feature>
<feature type="binding site" evidence="2">
    <location>
        <begin position="79"/>
        <end position="82"/>
    </location>
    <ligand>
        <name>substrate</name>
    </ligand>
</feature>
<feature type="binding site" evidence="3">
    <location>
        <position position="86"/>
    </location>
    <ligand>
        <name>ATP</name>
        <dbReference type="ChEBI" id="CHEBI:30616"/>
    </ligand>
</feature>
<feature type="binding site" evidence="3">
    <location>
        <begin position="111"/>
        <end position="113"/>
    </location>
    <ligand>
        <name>ATP</name>
        <dbReference type="ChEBI" id="CHEBI:30616"/>
    </ligand>
</feature>
<feature type="binding site" evidence="2">
    <location>
        <position position="178"/>
    </location>
    <ligand>
        <name>substrate</name>
    </ligand>
</feature>
<feature type="binding site" evidence="3">
    <location>
        <position position="185"/>
    </location>
    <ligand>
        <name>ATP</name>
        <dbReference type="ChEBI" id="CHEBI:30616"/>
    </ligand>
</feature>
<feature type="binding site" evidence="3">
    <location>
        <position position="191"/>
    </location>
    <ligand>
        <name>ATP</name>
        <dbReference type="ChEBI" id="CHEBI:30616"/>
    </ligand>
</feature>
<feature type="binding site" evidence="3">
    <location>
        <begin position="340"/>
        <end position="342"/>
    </location>
    <ligand>
        <name>ATP</name>
        <dbReference type="ChEBI" id="CHEBI:30616"/>
    </ligand>
</feature>
<feature type="modified residue" description="Phosphothreonine" evidence="2">
    <location>
        <position position="193"/>
    </location>
</feature>
<feature type="modified residue" description="Phosphoserine" evidence="2">
    <location>
        <position position="225"/>
    </location>
</feature>
<feature type="splice variant" id="VSP_033448" description="In isoform 2." evidence="19">
    <original>MEP</original>
    <variation>MWWCCVLFV</variation>
    <location>
        <begin position="1"/>
        <end position="3"/>
    </location>
</feature>
<feature type="splice variant" id="VSP_033449" description="In isoform 3." evidence="20">
    <location>
        <position position="4"/>
    </location>
</feature>
<feature type="mutagenesis site" description="No effect on recruitment to endocytic membrane. No effect on membrane fusion produced by sphingosine." evidence="12">
    <original>G</original>
    <variation>D</variation>
    <location>
        <position position="82"/>
    </location>
</feature>
<feature type="sequence conflict" description="In Ref. 1; BAE33198." evidence="21" ref="1">
    <original>R</original>
    <variation>H</variation>
    <location>
        <position position="146"/>
    </location>
</feature>
<reference key="1">
    <citation type="journal article" date="1998" name="J. Biol. Chem.">
        <title>Molecular cloning and functional characterization of murine sphingosine kinase.</title>
        <authorList>
            <person name="Kohama T."/>
            <person name="Olivera A."/>
            <person name="Edsall L."/>
            <person name="Nagiec M.M."/>
            <person name="Dickson R."/>
            <person name="Spiegel S."/>
        </authorList>
    </citation>
    <scope>NUCLEOTIDE SEQUENCE [MRNA] (ISOFORM 2)</scope>
    <scope>FUNCTION</scope>
    <scope>CATALYTIC ACTIVITY</scope>
    <scope>SUBSTRATE SPECIFICITY</scope>
    <scope>TISSUE SPECIFICITY</scope>
</reference>
<reference key="2">
    <citation type="submission" date="2001-08" db="EMBL/GenBank/DDBJ databases">
        <authorList>
            <person name="Thompson D."/>
            <person name="Pyne S."/>
        </authorList>
    </citation>
    <scope>NUCLEOTIDE SEQUENCE [MRNA] (ISOFORM 3)</scope>
</reference>
<reference key="3">
    <citation type="journal article" date="2005" name="Science">
        <title>The transcriptional landscape of the mammalian genome.</title>
        <authorList>
            <person name="Carninci P."/>
            <person name="Kasukawa T."/>
            <person name="Katayama S."/>
            <person name="Gough J."/>
            <person name="Frith M.C."/>
            <person name="Maeda N."/>
            <person name="Oyama R."/>
            <person name="Ravasi T."/>
            <person name="Lenhard B."/>
            <person name="Wells C."/>
            <person name="Kodzius R."/>
            <person name="Shimokawa K."/>
            <person name="Bajic V.B."/>
            <person name="Brenner S.E."/>
            <person name="Batalov S."/>
            <person name="Forrest A.R."/>
            <person name="Zavolan M."/>
            <person name="Davis M.J."/>
            <person name="Wilming L.G."/>
            <person name="Aidinis V."/>
            <person name="Allen J.E."/>
            <person name="Ambesi-Impiombato A."/>
            <person name="Apweiler R."/>
            <person name="Aturaliya R.N."/>
            <person name="Bailey T.L."/>
            <person name="Bansal M."/>
            <person name="Baxter L."/>
            <person name="Beisel K.W."/>
            <person name="Bersano T."/>
            <person name="Bono H."/>
            <person name="Chalk A.M."/>
            <person name="Chiu K.P."/>
            <person name="Choudhary V."/>
            <person name="Christoffels A."/>
            <person name="Clutterbuck D.R."/>
            <person name="Crowe M.L."/>
            <person name="Dalla E."/>
            <person name="Dalrymple B.P."/>
            <person name="de Bono B."/>
            <person name="Della Gatta G."/>
            <person name="di Bernardo D."/>
            <person name="Down T."/>
            <person name="Engstrom P."/>
            <person name="Fagiolini M."/>
            <person name="Faulkner G."/>
            <person name="Fletcher C.F."/>
            <person name="Fukushima T."/>
            <person name="Furuno M."/>
            <person name="Futaki S."/>
            <person name="Gariboldi M."/>
            <person name="Georgii-Hemming P."/>
            <person name="Gingeras T.R."/>
            <person name="Gojobori T."/>
            <person name="Green R.E."/>
            <person name="Gustincich S."/>
            <person name="Harbers M."/>
            <person name="Hayashi Y."/>
            <person name="Hensch T.K."/>
            <person name="Hirokawa N."/>
            <person name="Hill D."/>
            <person name="Huminiecki L."/>
            <person name="Iacono M."/>
            <person name="Ikeo K."/>
            <person name="Iwama A."/>
            <person name="Ishikawa T."/>
            <person name="Jakt M."/>
            <person name="Kanapin A."/>
            <person name="Katoh M."/>
            <person name="Kawasawa Y."/>
            <person name="Kelso J."/>
            <person name="Kitamura H."/>
            <person name="Kitano H."/>
            <person name="Kollias G."/>
            <person name="Krishnan S.P."/>
            <person name="Kruger A."/>
            <person name="Kummerfeld S.K."/>
            <person name="Kurochkin I.V."/>
            <person name="Lareau L.F."/>
            <person name="Lazarevic D."/>
            <person name="Lipovich L."/>
            <person name="Liu J."/>
            <person name="Liuni S."/>
            <person name="McWilliam S."/>
            <person name="Madan Babu M."/>
            <person name="Madera M."/>
            <person name="Marchionni L."/>
            <person name="Matsuda H."/>
            <person name="Matsuzawa S."/>
            <person name="Miki H."/>
            <person name="Mignone F."/>
            <person name="Miyake S."/>
            <person name="Morris K."/>
            <person name="Mottagui-Tabar S."/>
            <person name="Mulder N."/>
            <person name="Nakano N."/>
            <person name="Nakauchi H."/>
            <person name="Ng P."/>
            <person name="Nilsson R."/>
            <person name="Nishiguchi S."/>
            <person name="Nishikawa S."/>
            <person name="Nori F."/>
            <person name="Ohara O."/>
            <person name="Okazaki Y."/>
            <person name="Orlando V."/>
            <person name="Pang K.C."/>
            <person name="Pavan W.J."/>
            <person name="Pavesi G."/>
            <person name="Pesole G."/>
            <person name="Petrovsky N."/>
            <person name="Piazza S."/>
            <person name="Reed J."/>
            <person name="Reid J.F."/>
            <person name="Ring B.Z."/>
            <person name="Ringwald M."/>
            <person name="Rost B."/>
            <person name="Ruan Y."/>
            <person name="Salzberg S.L."/>
            <person name="Sandelin A."/>
            <person name="Schneider C."/>
            <person name="Schoenbach C."/>
            <person name="Sekiguchi K."/>
            <person name="Semple C.A."/>
            <person name="Seno S."/>
            <person name="Sessa L."/>
            <person name="Sheng Y."/>
            <person name="Shibata Y."/>
            <person name="Shimada H."/>
            <person name="Shimada K."/>
            <person name="Silva D."/>
            <person name="Sinclair B."/>
            <person name="Sperling S."/>
            <person name="Stupka E."/>
            <person name="Sugiura K."/>
            <person name="Sultana R."/>
            <person name="Takenaka Y."/>
            <person name="Taki K."/>
            <person name="Tammoja K."/>
            <person name="Tan S.L."/>
            <person name="Tang S."/>
            <person name="Taylor M.S."/>
            <person name="Tegner J."/>
            <person name="Teichmann S.A."/>
            <person name="Ueda H.R."/>
            <person name="van Nimwegen E."/>
            <person name="Verardo R."/>
            <person name="Wei C.L."/>
            <person name="Yagi K."/>
            <person name="Yamanishi H."/>
            <person name="Zabarovsky E."/>
            <person name="Zhu S."/>
            <person name="Zimmer A."/>
            <person name="Hide W."/>
            <person name="Bult C."/>
            <person name="Grimmond S.M."/>
            <person name="Teasdale R.D."/>
            <person name="Liu E.T."/>
            <person name="Brusic V."/>
            <person name="Quackenbush J."/>
            <person name="Wahlestedt C."/>
            <person name="Mattick J.S."/>
            <person name="Hume D.A."/>
            <person name="Kai C."/>
            <person name="Sasaki D."/>
            <person name="Tomaru Y."/>
            <person name="Fukuda S."/>
            <person name="Kanamori-Katayama M."/>
            <person name="Suzuki M."/>
            <person name="Aoki J."/>
            <person name="Arakawa T."/>
            <person name="Iida J."/>
            <person name="Imamura K."/>
            <person name="Itoh M."/>
            <person name="Kato T."/>
            <person name="Kawaji H."/>
            <person name="Kawagashira N."/>
            <person name="Kawashima T."/>
            <person name="Kojima M."/>
            <person name="Kondo S."/>
            <person name="Konno H."/>
            <person name="Nakano K."/>
            <person name="Ninomiya N."/>
            <person name="Nishio T."/>
            <person name="Okada M."/>
            <person name="Plessy C."/>
            <person name="Shibata K."/>
            <person name="Shiraki T."/>
            <person name="Suzuki S."/>
            <person name="Tagami M."/>
            <person name="Waki K."/>
            <person name="Watahiki A."/>
            <person name="Okamura-Oho Y."/>
            <person name="Suzuki H."/>
            <person name="Kawai J."/>
            <person name="Hayashizaki Y."/>
        </authorList>
    </citation>
    <scope>NUCLEOTIDE SEQUENCE [LARGE SCALE MRNA] (ISOFORM 1)</scope>
    <source>
        <strain>C57BL/6J</strain>
        <strain>NOD</strain>
        <tissue>Placenta</tissue>
    </source>
</reference>
<reference key="4">
    <citation type="journal article" date="2009" name="PLoS Biol.">
        <title>Lineage-specific biology revealed by a finished genome assembly of the mouse.</title>
        <authorList>
            <person name="Church D.M."/>
            <person name="Goodstadt L."/>
            <person name="Hillier L.W."/>
            <person name="Zody M.C."/>
            <person name="Goldstein S."/>
            <person name="She X."/>
            <person name="Bult C.J."/>
            <person name="Agarwala R."/>
            <person name="Cherry J.L."/>
            <person name="DiCuccio M."/>
            <person name="Hlavina W."/>
            <person name="Kapustin Y."/>
            <person name="Meric P."/>
            <person name="Maglott D."/>
            <person name="Birtle Z."/>
            <person name="Marques A.C."/>
            <person name="Graves T."/>
            <person name="Zhou S."/>
            <person name="Teague B."/>
            <person name="Potamousis K."/>
            <person name="Churas C."/>
            <person name="Place M."/>
            <person name="Herschleb J."/>
            <person name="Runnheim R."/>
            <person name="Forrest D."/>
            <person name="Amos-Landgraf J."/>
            <person name="Schwartz D.C."/>
            <person name="Cheng Z."/>
            <person name="Lindblad-Toh K."/>
            <person name="Eichler E.E."/>
            <person name="Ponting C.P."/>
        </authorList>
    </citation>
    <scope>NUCLEOTIDE SEQUENCE [LARGE SCALE GENOMIC DNA]</scope>
    <source>
        <strain>C57BL/6J</strain>
    </source>
</reference>
<reference key="5">
    <citation type="journal article" date="2004" name="Genome Res.">
        <title>The status, quality, and expansion of the NIH full-length cDNA project: the Mammalian Gene Collection (MGC).</title>
        <authorList>
            <consortium name="The MGC Project Team"/>
        </authorList>
    </citation>
    <scope>NUCLEOTIDE SEQUENCE [LARGE SCALE MRNA] (ISOFORM 1)</scope>
    <source>
        <strain>FVB/N</strain>
        <tissue>Kidney</tissue>
    </source>
</reference>
<reference key="6">
    <citation type="journal article" date="2004" name="FEBS Lett.">
        <title>Aminoacylase 1 is a sphingosine kinase 1-interacting protein.</title>
        <authorList>
            <person name="Maceyka M."/>
            <person name="Nava V.E."/>
            <person name="Milstien S."/>
            <person name="Spiegel S."/>
        </authorList>
    </citation>
    <scope>INTERACTION WITH ACY1</scope>
</reference>
<reference key="7">
    <citation type="journal article" date="2004" name="J. Biol. Chem.">
        <title>Mice deficient in sphingosine kinase 1 are rendered lymphopenic by FTY720.</title>
        <authorList>
            <person name="Allende M.L."/>
            <person name="Sasaki T."/>
            <person name="Kawai H."/>
            <person name="Olivera A."/>
            <person name="Mi Y."/>
            <person name="van Echten-Deckert G."/>
            <person name="Hajdu R."/>
            <person name="Rosenbach M."/>
            <person name="Keohane C.A."/>
            <person name="Mandala S."/>
            <person name="Spiegel S."/>
            <person name="Proia R.L."/>
        </authorList>
    </citation>
    <scope>DISRUPTION PHENOTYPE</scope>
</reference>
<reference key="8">
    <citation type="journal article" date="2005" name="J. Biol. Chem.">
        <title>SphK1 and SphK2, sphingosine kinase isoenzymes with opposing functions in sphingolipid metabolism.</title>
        <authorList>
            <person name="Maceyka M."/>
            <person name="Sankala H."/>
            <person name="Hait N.C."/>
            <person name="Le Stunff H."/>
            <person name="Liu H."/>
            <person name="Toman R."/>
            <person name="Collier C."/>
            <person name="Zhang M."/>
            <person name="Satin L.S."/>
            <person name="Merrill A.H. Jr."/>
            <person name="Milstien S."/>
            <person name="Spiegel S."/>
        </authorList>
    </citation>
    <scope>FUNCTION</scope>
    <scope>SUBCELLULAR LOCATION</scope>
</reference>
<reference key="9">
    <citation type="journal article" date="2005" name="Mol. Cell. Biol.">
        <title>Essential role for sphingosine kinases in neural and vascular development.</title>
        <authorList>
            <person name="Mizugishi K."/>
            <person name="Yamashita T."/>
            <person name="Olivera A."/>
            <person name="Miller G.F."/>
            <person name="Spiegel S."/>
            <person name="Proia R.L."/>
        </authorList>
    </citation>
    <scope>DISRUPTION PHENOTYPE</scope>
    <scope>DEVELOPMENTAL STAGE</scope>
</reference>
<reference key="10">
    <citation type="journal article" date="2007" name="Immunity">
        <title>The sphingosine kinase-sphingosine-1-phosphate axis is a determinant of mast cell function and anaphylaxis.</title>
        <authorList>
            <person name="Olivera A."/>
            <person name="Mizugishi K."/>
            <person name="Tikhonova A."/>
            <person name="Ciaccia L."/>
            <person name="Odom S."/>
            <person name="Proia R.L."/>
            <person name="Rivera J."/>
        </authorList>
    </citation>
    <scope>CATALYTIC ACTIVITY</scope>
</reference>
<reference key="11">
    <citation type="journal article" date="2011" name="J. Biol. Chem.">
        <title>The sphingosine 1-phosphate transporter, SPNS2, functions as a transporter of the phosphorylated form of the immunomodulating agent FTY720.</title>
        <authorList>
            <person name="Hisano Y."/>
            <person name="Kobayashi N."/>
            <person name="Kawahara A."/>
            <person name="Yamaguchi A."/>
            <person name="Nishi T."/>
        </authorList>
    </citation>
    <scope>FUNCTION</scope>
</reference>
<reference key="12">
    <citation type="journal article" date="2014" name="Nat. Cell Biol.">
        <title>Coupling between endocytosis and sphingosine kinase 1 recruitment.</title>
        <authorList>
            <person name="Shen H."/>
            <person name="Giordano F."/>
            <person name="Wu Y."/>
            <person name="Chan J."/>
            <person name="Zhu C."/>
            <person name="Milosevic I."/>
            <person name="Wu X."/>
            <person name="Yao K."/>
            <person name="Chen B."/>
            <person name="Baumgart T."/>
            <person name="Sieburth D."/>
            <person name="De Camilli P."/>
        </authorList>
    </citation>
    <scope>FUNCTION</scope>
    <scope>SUBCELLULAR LOCATION</scope>
</reference>
<reference key="13">
    <citation type="journal article" date="2014" name="Nat. Commun.">
        <title>Pathological roles of the VEGF/SphK pathway in Niemann-Pick type C neurons.</title>
        <authorList>
            <person name="Lee H."/>
            <person name="Lee J.K."/>
            <person name="Park M.H."/>
            <person name="Hong Y.R."/>
            <person name="Marti H.H."/>
            <person name="Kim H."/>
            <person name="Okada Y."/>
            <person name="Otsu M."/>
            <person name="Seo E.J."/>
            <person name="Park J.H."/>
            <person name="Bae J.H."/>
            <person name="Okino N."/>
            <person name="He X."/>
            <person name="Schuchman E.H."/>
            <person name="Bae J.S."/>
            <person name="Jin H.K."/>
        </authorList>
    </citation>
    <scope>FUNCTION</scope>
    <scope>ACTIVITY REGULATION</scope>
    <scope>CATALYTIC ACTIVITY</scope>
</reference>
<reference key="14">
    <citation type="journal article" date="2016" name="Cell Rep.">
        <title>Sphingosine Kinase 1 Cooperates with Autophagy to Maintain Endocytic Membrane Trafficking.</title>
        <authorList>
            <person name="Young M.M."/>
            <person name="Takahashi Y."/>
            <person name="Fox T.E."/>
            <person name="Yun J.K."/>
            <person name="Kester M."/>
            <person name="Wang H.G."/>
        </authorList>
    </citation>
    <scope>FUNCTION</scope>
    <scope>SUBCELLULAR LOCATION</scope>
    <scope>MUTAGENESIS OF GLY-82</scope>
</reference>
<reference key="15">
    <citation type="journal article" date="2017" name="J. Biol. Chem.">
        <title>Sphingosine and Sphingosine Kinase 1 Involvement in Endocytic Membrane Trafficking.</title>
        <authorList>
            <person name="Lima S."/>
            <person name="Milstien S."/>
            <person name="Spiegel S."/>
        </authorList>
    </citation>
    <scope>FUNCTION</scope>
</reference>
<reference key="16">
    <citation type="journal article" date="2018" name="Nat. Commun.">
        <title>Neuronal SphK1 acetylates COX2 and contributes to pathogenesis in a model of Alzheimer's Disease.</title>
        <authorList>
            <person name="Lee J.Y."/>
            <person name="Han S.H."/>
            <person name="Park M.H."/>
            <person name="Baek B."/>
            <person name="Song I.S."/>
            <person name="Choi M.K."/>
            <person name="Takuwa Y."/>
            <person name="Ryu H."/>
            <person name="Kim S.H."/>
            <person name="He X."/>
            <person name="Schuchman E.H."/>
            <person name="Bae J.S."/>
            <person name="Jin H.K."/>
        </authorList>
    </citation>
    <scope>FUNCTION</scope>
    <scope>DISRUPTION PHENOTYPE</scope>
    <scope>CATALYTIC ACTIVITY</scope>
    <scope>BIOPHYSICOCHEMICAL PROPERTIES</scope>
    <scope>ACTIVITY REGULATION</scope>
    <scope>TISSUE SPECIFICITY</scope>
    <scope>SUBCELLULAR LOCATION</scope>
</reference>
<reference key="17">
    <citation type="journal article" date="2021" name="J. Biol. Chem.">
        <title>Erythrocytes efficiently utilize exogenous sphingosines for S1P synthesis and export via Mfsd2b.</title>
        <authorList>
            <person name="Nguyen T.Q."/>
            <person name="Vu T.M."/>
            <person name="Tukijan F."/>
            <person name="Muralidharan S."/>
            <person name="Foo J.C."/>
            <person name="Li Chin J.F."/>
            <person name="Hasan Z."/>
            <person name="Torta F."/>
            <person name="Nguyen L.N."/>
        </authorList>
    </citation>
    <scope>FUNCTION</scope>
    <scope>CATALYTIC ACTIVITY</scope>
</reference>
<proteinExistence type="evidence at protein level"/>
<organism>
    <name type="scientific">Mus musculus</name>
    <name type="common">Mouse</name>
    <dbReference type="NCBI Taxonomy" id="10090"/>
    <lineage>
        <taxon>Eukaryota</taxon>
        <taxon>Metazoa</taxon>
        <taxon>Chordata</taxon>
        <taxon>Craniata</taxon>
        <taxon>Vertebrata</taxon>
        <taxon>Euteleostomi</taxon>
        <taxon>Mammalia</taxon>
        <taxon>Eutheria</taxon>
        <taxon>Euarchontoglires</taxon>
        <taxon>Glires</taxon>
        <taxon>Rodentia</taxon>
        <taxon>Myomorpha</taxon>
        <taxon>Muroidea</taxon>
        <taxon>Muridae</taxon>
        <taxon>Murinae</taxon>
        <taxon>Mus</taxon>
        <taxon>Mus</taxon>
    </lineage>
</organism>
<sequence>MEPVECPRGLLPRPCRVLVLLNPQGGKGKALQLFQSRVQPFLEEAEITFKLILTERKNHARELVCAEELGHWDALAVMSGDGLMHEVVNGLMERPDWETAIQKPLCSLPGGSGNALAASVNHYAGYEQVTNEDLLINCTLLLCRRRLSPMNLLSLHTASGLRLYSVLSLSWGFVADVDLESEKYRRLGEIRFTVGTFFRLASLRIYQGQLAYLPVGTVASKRPASTLVQKGPVDTHLVPLEEPVPSHWTVVPEQDFVLVLVLLHTHLSSELFAAPMGRCEAGVMHLFYVRAGVSRAALLRLFLAMQKGKHMELDCPYLVHVPVVAFRLEPRSQRGVFSVDGELMVCEAVQGQVHPNYLWMVCGSRDAPSGRDSRRGPPPEEP</sequence>
<protein>
    <recommendedName>
        <fullName evidence="21">Sphingosine kinase 1</fullName>
        <shortName evidence="17">SK 1</shortName>
        <shortName>SPK 1</shortName>
        <ecNumber evidence="8 11 15">2.7.1.91</ecNumber>
    </recommendedName>
    <alternativeName>
        <fullName evidence="18">Acetyltransferase SPHK1</fullName>
        <ecNumber evidence="14">2.3.1.-</ecNumber>
    </alternativeName>
</protein>
<evidence type="ECO:0000250" key="1">
    <source>
        <dbReference type="UniProtKB" id="Q91V26"/>
    </source>
</evidence>
<evidence type="ECO:0000250" key="2">
    <source>
        <dbReference type="UniProtKB" id="Q9NYA1"/>
    </source>
</evidence>
<evidence type="ECO:0000255" key="3">
    <source>
        <dbReference type="PROSITE-ProRule" id="PRU00783"/>
    </source>
</evidence>
<evidence type="ECO:0000269" key="4">
    <source>
    </source>
</evidence>
<evidence type="ECO:0000269" key="5">
    <source>
    </source>
</evidence>
<evidence type="ECO:0000269" key="6">
    <source>
    </source>
</evidence>
<evidence type="ECO:0000269" key="7">
    <source>
    </source>
</evidence>
<evidence type="ECO:0000269" key="8">
    <source>
    </source>
</evidence>
<evidence type="ECO:0000269" key="9">
    <source>
    </source>
</evidence>
<evidence type="ECO:0000269" key="10">
    <source>
    </source>
</evidence>
<evidence type="ECO:0000269" key="11">
    <source>
    </source>
</evidence>
<evidence type="ECO:0000269" key="12">
    <source>
    </source>
</evidence>
<evidence type="ECO:0000269" key="13">
    <source>
    </source>
</evidence>
<evidence type="ECO:0000269" key="14">
    <source>
    </source>
</evidence>
<evidence type="ECO:0000269" key="15">
    <source>
    </source>
</evidence>
<evidence type="ECO:0000269" key="16">
    <source>
    </source>
</evidence>
<evidence type="ECO:0000303" key="17">
    <source>
    </source>
</evidence>
<evidence type="ECO:0000303" key="18">
    <source>
    </source>
</evidence>
<evidence type="ECO:0000303" key="19">
    <source>
    </source>
</evidence>
<evidence type="ECO:0000303" key="20">
    <source ref="2"/>
</evidence>
<evidence type="ECO:0000305" key="21"/>
<evidence type="ECO:0000305" key="22">
    <source>
    </source>
</evidence>
<evidence type="ECO:0000312" key="23">
    <source>
        <dbReference type="MGI" id="MGI:1316649"/>
    </source>
</evidence>
<comment type="function">
    <text evidence="2 6 9 11 12 13 15 16 22">Catalyzes the phosphorylation of sphingosine to form sphingosine 1-phosphate (SPP), a lipid mediator with both intra- and extracellular functions (PubMed:17346996, PubMed:21084291, PubMed:25417698, PubMed:29662056, PubMed:33334894). Also acts on D-erythro-sphingosine and to a lesser extent sphinganine, but not other lipids, such as D,L-threo-dihydrosphingosine, N,N-dimethylsphingosine, diacylglycerol, ceramide, or phosphatidylinositol (PubMed:9726979). In contrast to proapoptotic SPHK2, has a negative effect on intracellular ceramide levels, enhances cell growth and inhibits apoptosis (PubMed:16118219). Involved in the regulation of inflammatory response and neuroinflammation. Via the product sphingosine 1-phosphate, stimulates TRAF2 E3 ubiquitin ligase activity, and promotes activation of NF-kappa-B in response to TNF signaling (By similarity). In response to TNF and in parallel to NF-kappa-B activation, negatively regulates RANTES induction through p38 MAPK signaling pathway (By similarity). Involved in endocytic membrane trafficking induced by sphingosine, recruited to dilate endosomes, also plays a role on later stages of endosomal maturation and membrane fusion independently of its kinase activity (PubMed:27806293, PubMed:28049734). In Purkinje cells, seems to be also involved in the regulation of autophagosome-lysosome fusion upon VEGFA (PubMed:25417698).</text>
</comment>
<comment type="function">
    <text evidence="14">Has serine acetyltransferase activity on PTGS2/COX2 in an acetyl-CoA dependent manner. The acetyltransferase activity increases in presence of the kinase substrate, sphingosine. During neuroinflammation, through PTGS2 acetylation, promotes neuronal secretion of specialized preresolving mediators (SPMs), especially 15-R-lipoxin A4, which results in an increase of phagocytic microglia.</text>
</comment>
<comment type="catalytic activity">
    <reaction evidence="8 11 14 15">
        <text>a sphingoid base + ATP = a sphingoid 1-phosphate + ADP + H(+)</text>
        <dbReference type="Rhea" id="RHEA:51496"/>
        <dbReference type="ChEBI" id="CHEBI:15378"/>
        <dbReference type="ChEBI" id="CHEBI:30616"/>
        <dbReference type="ChEBI" id="CHEBI:76941"/>
        <dbReference type="ChEBI" id="CHEBI:84410"/>
        <dbReference type="ChEBI" id="CHEBI:456216"/>
        <dbReference type="EC" id="2.7.1.91"/>
    </reaction>
    <physiologicalReaction direction="left-to-right" evidence="8 11 14 15">
        <dbReference type="Rhea" id="RHEA:51497"/>
    </physiologicalReaction>
</comment>
<comment type="catalytic activity">
    <reaction evidence="14">
        <text>L-seryl-[protein] + acetyl-CoA = O-acetyl-L-seryl-[protein] + CoA</text>
        <dbReference type="Rhea" id="RHEA:59392"/>
        <dbReference type="Rhea" id="RHEA-COMP:9863"/>
        <dbReference type="Rhea" id="RHEA-COMP:15352"/>
        <dbReference type="ChEBI" id="CHEBI:29999"/>
        <dbReference type="ChEBI" id="CHEBI:57287"/>
        <dbReference type="ChEBI" id="CHEBI:57288"/>
        <dbReference type="ChEBI" id="CHEBI:141128"/>
    </reaction>
    <physiologicalReaction direction="left-to-right" evidence="14">
        <dbReference type="Rhea" id="RHEA:59393"/>
    </physiologicalReaction>
</comment>
<comment type="catalytic activity">
    <reaction evidence="16">
        <text>sphinganine + ATP = sphinganine 1-phosphate + ADP + H(+)</text>
        <dbReference type="Rhea" id="RHEA:15465"/>
        <dbReference type="ChEBI" id="CHEBI:15378"/>
        <dbReference type="ChEBI" id="CHEBI:30616"/>
        <dbReference type="ChEBI" id="CHEBI:57817"/>
        <dbReference type="ChEBI" id="CHEBI:57939"/>
        <dbReference type="ChEBI" id="CHEBI:456216"/>
        <dbReference type="EC" id="2.7.1.91"/>
    </reaction>
</comment>
<comment type="catalytic activity">
    <reaction evidence="16">
        <text>sphing-4-enine + ATP = sphing-4-enine 1-phosphate + ADP + H(+)</text>
        <dbReference type="Rhea" id="RHEA:35847"/>
        <dbReference type="ChEBI" id="CHEBI:15378"/>
        <dbReference type="ChEBI" id="CHEBI:30616"/>
        <dbReference type="ChEBI" id="CHEBI:57756"/>
        <dbReference type="ChEBI" id="CHEBI:60119"/>
        <dbReference type="ChEBI" id="CHEBI:456216"/>
        <dbReference type="EC" id="2.7.1.91"/>
    </reaction>
</comment>
<comment type="catalytic activity">
    <reaction evidence="2">
        <text>1-O-hexadecyl-2-amino-sn-glycerol + ATP = 1-O-hexadecyl-2-desoxy-2-amino-sn-glycero-3-phosphate + ADP + H(+)</text>
        <dbReference type="Rhea" id="RHEA:41163"/>
        <dbReference type="ChEBI" id="CHEBI:15378"/>
        <dbReference type="ChEBI" id="CHEBI:30616"/>
        <dbReference type="ChEBI" id="CHEBI:77786"/>
        <dbReference type="ChEBI" id="CHEBI:77787"/>
        <dbReference type="ChEBI" id="CHEBI:456216"/>
    </reaction>
</comment>
<comment type="cofactor">
    <cofactor evidence="2">
        <name>Mg(2+)</name>
        <dbReference type="ChEBI" id="CHEBI:18420"/>
    </cofactor>
</comment>
<comment type="activity regulation">
    <text evidence="1 11 14">Acetyltransferase activity increases in presence of the kinase substrate, sphingosine (PubMed:29662056). In Purkinje cells, kinase activity on sphingosine increases in presence of VEGFA (PubMed:25417698). In neurons, kinase activity increases during the first 24h in presence of Amyloid-beta protein 42 to decrease after 96h (By similarity).</text>
</comment>
<comment type="biophysicochemical properties">
    <kinetics>
        <KM evidence="14">60.2 uM for Acetyl-CoA (in presence of 10 uM of sphingosine)</KM>
        <KM evidence="14">6.4 uM for Acetyl-CoA (in presence of 100 uM of sphingosine)</KM>
        <text evidence="14">kcat is 0.0185 min(-1) for Acetyl-CoA as substrate.</text>
    </kinetics>
</comment>
<comment type="subunit">
    <text evidence="2 4">Interacts with ACY1 (PubMed:15196915). Binds to calmodulin. Interacts with SPHKAP (By similarity). Interacts with CIB1, the interaction occurs in a calcium-dependent manner (By similarity). Interacts with TRAF2 (By similarity). Interacts with EEF1A1; the interaction enhances SPHK1 kinase activity (By similarity).</text>
</comment>
<comment type="subcellular location">
    <subcellularLocation>
        <location evidence="6 12 14">Cytoplasm</location>
    </subcellularLocation>
    <subcellularLocation>
        <location evidence="10 12">Endosome membrane</location>
        <topology evidence="10">Peripheral membrane protein</topology>
    </subcellularLocation>
    <subcellularLocation>
        <location evidence="14">Nucleus</location>
    </subcellularLocation>
    <subcellularLocation>
        <location evidence="2">Cell membrane</location>
    </subcellularLocation>
    <subcellularLocation>
        <location evidence="10">Synapse</location>
    </subcellularLocation>
    <text evidence="2 12">Translocated from the cytoplasm to the plasma membrane in a CIB1-dependent manner. Binds to membranes containing negatively charged lipids but not neutral lipids (By similarity). Recruited to endocytic membranes by sphingosine where promotes membrane fusion (PubMed:27806293).</text>
</comment>
<comment type="alternative products">
    <event type="alternative splicing"/>
    <isoform>
        <id>Q8CI15-1</id>
        <name>1</name>
        <sequence type="displayed"/>
    </isoform>
    <isoform>
        <id>Q8CI15-2</id>
        <name>2</name>
        <sequence type="described" ref="VSP_033448"/>
    </isoform>
    <isoform>
        <id>Q8CI15-3</id>
        <name>3</name>
        <sequence type="described" ref="VSP_033449"/>
    </isoform>
</comment>
<comment type="tissue specificity">
    <text evidence="14 16">Widely expressed (PubMed:9726979). Expressed in brain (at protein level). Detected in neurons.</text>
</comment>
<comment type="developmental stage">
    <text evidence="7">At 10.5 dpc, expressed in the whole brain, with the highest levels in the telencephalon.</text>
</comment>
<comment type="disruption phenotype">
    <text evidence="5 7 14">Mutants are viable, fertile and without any obvious abnormalities (PubMed:15459201). Mutant mice show reduced SPP levels in serum (PubMed:15459201, PubMed:16314531). Conditional mutants in neurons exhibit a decrease of amyloid-beta phagocytic activity (PubMed:29662056). Double knockout for SPHK1 and SPHK2 causes embryonic lethality (PubMed:16314531). Between 11.5 dpc and 12.5 dpc embryos exhibit cranial hemorrhage and die at 13.5 dpc (PubMed:16314531). At 11.5 dpc the wall of the dorsal aorta is poorly developed and endothelial cells are severely defective in all blood vessels in the mesenchymal region of the head (PubMed:16314531). Double knockout embryos also show a neural tube deffect (PubMed:16314531).</text>
</comment>
<accession>Q8CI15</accession>
<accession>O88886</accession>
<accession>Q3U2E3</accession>
<accession>Q91ZN3</accession>
<dbReference type="EC" id="2.7.1.91" evidence="8 11 15"/>
<dbReference type="EC" id="2.3.1.-" evidence="14"/>
<dbReference type="EMBL" id="AF068749">
    <property type="protein sequence ID" value="AAC61698.1"/>
    <property type="molecule type" value="mRNA"/>
</dbReference>
<dbReference type="EMBL" id="AF415213">
    <property type="protein sequence ID" value="AAL07499.1"/>
    <property type="molecule type" value="mRNA"/>
</dbReference>
<dbReference type="EMBL" id="AK155332">
    <property type="protein sequence ID" value="BAE33198.1"/>
    <property type="molecule type" value="mRNA"/>
</dbReference>
<dbReference type="EMBL" id="AK160900">
    <property type="protein sequence ID" value="BAE36079.1"/>
    <property type="molecule type" value="mRNA"/>
</dbReference>
<dbReference type="EMBL" id="AL645851">
    <property type="status" value="NOT_ANNOTATED_CDS"/>
    <property type="molecule type" value="Genomic_DNA"/>
</dbReference>
<dbReference type="EMBL" id="BC037710">
    <property type="protein sequence ID" value="AAH37710.1"/>
    <property type="molecule type" value="mRNA"/>
</dbReference>
<dbReference type="CCDS" id="CCDS25668.1">
    <molecule id="Q8CI15-1"/>
</dbReference>
<dbReference type="CCDS" id="CCDS48986.1">
    <molecule id="Q8CI15-3"/>
</dbReference>
<dbReference type="RefSeq" id="NP_001165943.1">
    <molecule id="Q8CI15-1"/>
    <property type="nucleotide sequence ID" value="NM_001172472.2"/>
</dbReference>
<dbReference type="RefSeq" id="NP_001165944.1">
    <molecule id="Q8CI15-1"/>
    <property type="nucleotide sequence ID" value="NM_001172473.1"/>
</dbReference>
<dbReference type="RefSeq" id="NP_001165946.1">
    <molecule id="Q8CI15-3"/>
    <property type="nucleotide sequence ID" value="NM_001172475.1"/>
</dbReference>
<dbReference type="RefSeq" id="NP_001359413.1">
    <molecule id="Q8CI15-1"/>
    <property type="nucleotide sequence ID" value="NM_001372484.1"/>
</dbReference>
<dbReference type="RefSeq" id="NP_001359415.1">
    <molecule id="Q8CI15-1"/>
    <property type="nucleotide sequence ID" value="NM_001372486.1"/>
</dbReference>
<dbReference type="RefSeq" id="NP_001359417.1">
    <molecule id="Q8CI15-3"/>
    <property type="nucleotide sequence ID" value="NM_001372488.1"/>
</dbReference>
<dbReference type="RefSeq" id="NP_001359418.1">
    <molecule id="Q8CI15-3"/>
    <property type="nucleotide sequence ID" value="NM_001372489.1"/>
</dbReference>
<dbReference type="RefSeq" id="NP_035581.1">
    <property type="nucleotide sequence ID" value="NM_011451.3"/>
</dbReference>
<dbReference type="RefSeq" id="NP_079643.2">
    <molecule id="Q8CI15-1"/>
    <property type="nucleotide sequence ID" value="NM_025367.6"/>
</dbReference>
<dbReference type="RefSeq" id="XP_006532733.1">
    <property type="nucleotide sequence ID" value="XM_006532670.3"/>
</dbReference>
<dbReference type="RefSeq" id="XP_006532734.1">
    <property type="nucleotide sequence ID" value="XM_006532671.3"/>
</dbReference>
<dbReference type="RefSeq" id="XP_006532735.1">
    <molecule id="Q8CI15-3"/>
    <property type="nucleotide sequence ID" value="XM_006532672.4"/>
</dbReference>
<dbReference type="RefSeq" id="XP_006532736.1">
    <property type="nucleotide sequence ID" value="XM_006532673.3"/>
</dbReference>
<dbReference type="SMR" id="Q8CI15"/>
<dbReference type="FunCoup" id="Q8CI15">
    <property type="interactions" value="1035"/>
</dbReference>
<dbReference type="IntAct" id="Q8CI15">
    <property type="interactions" value="3"/>
</dbReference>
<dbReference type="STRING" id="10090.ENSMUSP00000131010"/>
<dbReference type="BindingDB" id="Q8CI15"/>
<dbReference type="ChEMBL" id="CHEMBL2401605"/>
<dbReference type="SwissLipids" id="SLP:000000114"/>
<dbReference type="iPTMnet" id="Q8CI15"/>
<dbReference type="PhosphoSitePlus" id="Q8CI15"/>
<dbReference type="PaxDb" id="10090-ENSMUSP00000131010"/>
<dbReference type="ProteomicsDB" id="257558">
    <molecule id="Q8CI15-1"/>
</dbReference>
<dbReference type="ProteomicsDB" id="257559">
    <molecule id="Q8CI15-2"/>
</dbReference>
<dbReference type="ProteomicsDB" id="258584">
    <molecule id="Q8CI15-3"/>
</dbReference>
<dbReference type="Pumba" id="Q8CI15"/>
<dbReference type="Antibodypedia" id="19687">
    <property type="antibodies" value="758 antibodies from 48 providers"/>
</dbReference>
<dbReference type="DNASU" id="20698"/>
<dbReference type="Ensembl" id="ENSMUST00000063396.10">
    <molecule id="Q8CI15-1"/>
    <property type="protein sequence ID" value="ENSMUSP00000064743.4"/>
    <property type="gene ID" value="ENSMUSG00000061878.17"/>
</dbReference>
<dbReference type="Ensembl" id="ENSMUST00000063446.13">
    <molecule id="Q8CI15-1"/>
    <property type="protein sequence ID" value="ENSMUSP00000067865.7"/>
    <property type="gene ID" value="ENSMUSG00000061878.17"/>
</dbReference>
<dbReference type="Ensembl" id="ENSMUST00000100201.10">
    <molecule id="Q8CI15-3"/>
    <property type="protein sequence ID" value="ENSMUSP00000097775.4"/>
    <property type="gene ID" value="ENSMUSG00000061878.17"/>
</dbReference>
<dbReference type="Ensembl" id="ENSMUST00000106386.8">
    <molecule id="Q8CI15-1"/>
    <property type="protein sequence ID" value="ENSMUSP00000101994.2"/>
    <property type="gene ID" value="ENSMUSG00000061878.17"/>
</dbReference>
<dbReference type="Ensembl" id="ENSMUST00000106387.9">
    <molecule id="Q8CI15-1"/>
    <property type="protein sequence ID" value="ENSMUSP00000101995.3"/>
    <property type="gene ID" value="ENSMUSG00000061878.17"/>
</dbReference>
<dbReference type="Ensembl" id="ENSMUST00000106388.9">
    <molecule id="Q8CI15-1"/>
    <property type="protein sequence ID" value="ENSMUSP00000101996.3"/>
    <property type="gene ID" value="ENSMUSG00000061878.17"/>
</dbReference>
<dbReference type="Ensembl" id="ENSMUST00000141798.4">
    <molecule id="Q8CI15-2"/>
    <property type="protein sequence ID" value="ENSMUSP00000131010.2"/>
    <property type="gene ID" value="ENSMUSG00000061878.17"/>
</dbReference>
<dbReference type="GeneID" id="20698"/>
<dbReference type="KEGG" id="mmu:20698"/>
<dbReference type="UCSC" id="uc007mlg.2">
    <molecule id="Q8CI15-3"/>
    <property type="organism name" value="mouse"/>
</dbReference>
<dbReference type="UCSC" id="uc007mlh.2">
    <molecule id="Q8CI15-1"/>
    <property type="organism name" value="mouse"/>
</dbReference>
<dbReference type="UCSC" id="uc007mll.2">
    <molecule id="Q8CI15-2"/>
    <property type="organism name" value="mouse"/>
</dbReference>
<dbReference type="AGR" id="MGI:1316649"/>
<dbReference type="CTD" id="8877"/>
<dbReference type="MGI" id="MGI:1316649">
    <property type="gene designation" value="Sphk1"/>
</dbReference>
<dbReference type="VEuPathDB" id="HostDB:ENSMUSG00000061878"/>
<dbReference type="eggNOG" id="KOG1116">
    <property type="taxonomic scope" value="Eukaryota"/>
</dbReference>
<dbReference type="GeneTree" id="ENSGT00940000157864"/>
<dbReference type="InParanoid" id="Q8CI15"/>
<dbReference type="OMA" id="TMGNFYA"/>
<dbReference type="PhylomeDB" id="Q8CI15"/>
<dbReference type="TreeFam" id="TF354296"/>
<dbReference type="BRENDA" id="2.7.1.91">
    <property type="organism ID" value="3474"/>
</dbReference>
<dbReference type="Reactome" id="R-MMU-1660661">
    <property type="pathway name" value="Sphingolipid de novo biosynthesis"/>
</dbReference>
<dbReference type="Reactome" id="R-MMU-390471">
    <property type="pathway name" value="Association of TriC/CCT with target proteins during biosynthesis"/>
</dbReference>
<dbReference type="Reactome" id="R-MMU-5218921">
    <property type="pathway name" value="VEGFR2 mediated cell proliferation"/>
</dbReference>
<dbReference type="Reactome" id="R-MMU-9009391">
    <property type="pathway name" value="Extra-nuclear estrogen signaling"/>
</dbReference>
<dbReference type="Reactome" id="R-MMU-9833482">
    <property type="pathway name" value="PKR-mediated signaling"/>
</dbReference>
<dbReference type="SABIO-RK" id="Q8CI15"/>
<dbReference type="BioGRID-ORCS" id="20698">
    <property type="hits" value="2 hits in 79 CRISPR screens"/>
</dbReference>
<dbReference type="ChiTaRS" id="Sphk1">
    <property type="organism name" value="mouse"/>
</dbReference>
<dbReference type="PRO" id="PR:Q8CI15"/>
<dbReference type="Proteomes" id="UP000000589">
    <property type="component" value="Chromosome 11"/>
</dbReference>
<dbReference type="RNAct" id="Q8CI15">
    <property type="molecule type" value="protein"/>
</dbReference>
<dbReference type="Bgee" id="ENSMUSG00000061878">
    <property type="expression patterns" value="Expressed in gastrula and 146 other cell types or tissues"/>
</dbReference>
<dbReference type="ExpressionAtlas" id="Q8CI15">
    <property type="expression patterns" value="baseline and differential"/>
</dbReference>
<dbReference type="GO" id="GO:0005929">
    <property type="term" value="C:cilium"/>
    <property type="evidence" value="ECO:0007669"/>
    <property type="project" value="Ensembl"/>
</dbReference>
<dbReference type="GO" id="GO:0005905">
    <property type="term" value="C:clathrin-coated pit"/>
    <property type="evidence" value="ECO:0000250"/>
    <property type="project" value="UniProtKB"/>
</dbReference>
<dbReference type="GO" id="GO:0005737">
    <property type="term" value="C:cytoplasm"/>
    <property type="evidence" value="ECO:0000314"/>
    <property type="project" value="UniProtKB"/>
</dbReference>
<dbReference type="GO" id="GO:0031901">
    <property type="term" value="C:early endosome membrane"/>
    <property type="evidence" value="ECO:0000250"/>
    <property type="project" value="UniProtKB"/>
</dbReference>
<dbReference type="GO" id="GO:0030139">
    <property type="term" value="C:endocytic vesicle"/>
    <property type="evidence" value="ECO:0000314"/>
    <property type="project" value="UniProtKB"/>
</dbReference>
<dbReference type="GO" id="GO:0005634">
    <property type="term" value="C:nucleus"/>
    <property type="evidence" value="ECO:0000314"/>
    <property type="project" value="UniProtKB"/>
</dbReference>
<dbReference type="GO" id="GO:0005886">
    <property type="term" value="C:plasma membrane"/>
    <property type="evidence" value="ECO:0000250"/>
    <property type="project" value="UniProtKB"/>
</dbReference>
<dbReference type="GO" id="GO:0098793">
    <property type="term" value="C:presynapse"/>
    <property type="evidence" value="ECO:0000314"/>
    <property type="project" value="UniProtKB"/>
</dbReference>
<dbReference type="GO" id="GO:0016407">
    <property type="term" value="F:acetyltransferase activity"/>
    <property type="evidence" value="ECO:0000315"/>
    <property type="project" value="UniProtKB"/>
</dbReference>
<dbReference type="GO" id="GO:0005524">
    <property type="term" value="F:ATP binding"/>
    <property type="evidence" value="ECO:0007669"/>
    <property type="project" value="UniProtKB-KW"/>
</dbReference>
<dbReference type="GO" id="GO:0005516">
    <property type="term" value="F:calmodulin binding"/>
    <property type="evidence" value="ECO:0000266"/>
    <property type="project" value="MGI"/>
</dbReference>
<dbReference type="GO" id="GO:0017050">
    <property type="term" value="F:D-erythro-sphingosine kinase activity"/>
    <property type="evidence" value="ECO:0000314"/>
    <property type="project" value="UniProtKB"/>
</dbReference>
<dbReference type="GO" id="GO:0003677">
    <property type="term" value="F:DNA binding"/>
    <property type="evidence" value="ECO:0000266"/>
    <property type="project" value="MGI"/>
</dbReference>
<dbReference type="GO" id="GO:0008289">
    <property type="term" value="F:lipid binding"/>
    <property type="evidence" value="ECO:0000250"/>
    <property type="project" value="UniProtKB"/>
</dbReference>
<dbReference type="GO" id="GO:0000287">
    <property type="term" value="F:magnesium ion binding"/>
    <property type="evidence" value="ECO:0000250"/>
    <property type="project" value="UniProtKB"/>
</dbReference>
<dbReference type="GO" id="GO:0051721">
    <property type="term" value="F:protein phosphatase 2A binding"/>
    <property type="evidence" value="ECO:0007669"/>
    <property type="project" value="Ensembl"/>
</dbReference>
<dbReference type="GO" id="GO:0008481">
    <property type="term" value="F:sphingosine kinase activity"/>
    <property type="evidence" value="ECO:0000314"/>
    <property type="project" value="UniProtKB"/>
</dbReference>
<dbReference type="GO" id="GO:0038036">
    <property type="term" value="F:sphingosine-1-phosphate receptor activity"/>
    <property type="evidence" value="ECO:0007669"/>
    <property type="project" value="Ensembl"/>
</dbReference>
<dbReference type="GO" id="GO:0001568">
    <property type="term" value="P:blood vessel development"/>
    <property type="evidence" value="ECO:0000316"/>
    <property type="project" value="MGI"/>
</dbReference>
<dbReference type="GO" id="GO:0007420">
    <property type="term" value="P:brain development"/>
    <property type="evidence" value="ECO:0000316"/>
    <property type="project" value="MGI"/>
</dbReference>
<dbReference type="GO" id="GO:0019722">
    <property type="term" value="P:calcium-mediated signaling"/>
    <property type="evidence" value="ECO:0007669"/>
    <property type="project" value="Ensembl"/>
</dbReference>
<dbReference type="GO" id="GO:0008283">
    <property type="term" value="P:cell population proliferation"/>
    <property type="evidence" value="ECO:0000316"/>
    <property type="project" value="MGI"/>
</dbReference>
<dbReference type="GO" id="GO:0070301">
    <property type="term" value="P:cellular response to hydrogen peroxide"/>
    <property type="evidence" value="ECO:0000314"/>
    <property type="project" value="MGI"/>
</dbReference>
<dbReference type="GO" id="GO:0035924">
    <property type="term" value="P:cellular response to vascular endothelial growth factor stimulus"/>
    <property type="evidence" value="ECO:0000314"/>
    <property type="project" value="UniProtKB"/>
</dbReference>
<dbReference type="GO" id="GO:0071897">
    <property type="term" value="P:DNA biosynthetic process"/>
    <property type="evidence" value="ECO:0000315"/>
    <property type="project" value="MGI"/>
</dbReference>
<dbReference type="GO" id="GO:0006954">
    <property type="term" value="P:inflammatory response"/>
    <property type="evidence" value="ECO:0000315"/>
    <property type="project" value="MGI"/>
</dbReference>
<dbReference type="GO" id="GO:0043066">
    <property type="term" value="P:negative regulation of apoptotic process"/>
    <property type="evidence" value="ECO:0000314"/>
    <property type="project" value="UniProtKB"/>
</dbReference>
<dbReference type="GO" id="GO:1900060">
    <property type="term" value="P:negative regulation of ceramide biosynthetic process"/>
    <property type="evidence" value="ECO:0000315"/>
    <property type="project" value="UniProtKB"/>
</dbReference>
<dbReference type="GO" id="GO:0016310">
    <property type="term" value="P:phosphorylation"/>
    <property type="evidence" value="ECO:0000314"/>
    <property type="project" value="UniProtKB"/>
</dbReference>
<dbReference type="GO" id="GO:0045766">
    <property type="term" value="P:positive regulation of angiogenesis"/>
    <property type="evidence" value="ECO:0007669"/>
    <property type="project" value="Ensembl"/>
</dbReference>
<dbReference type="GO" id="GO:0030307">
    <property type="term" value="P:positive regulation of cell growth"/>
    <property type="evidence" value="ECO:0007669"/>
    <property type="project" value="Ensembl"/>
</dbReference>
<dbReference type="GO" id="GO:0030335">
    <property type="term" value="P:positive regulation of cell migration"/>
    <property type="evidence" value="ECO:0007669"/>
    <property type="project" value="Ensembl"/>
</dbReference>
<dbReference type="GO" id="GO:0008284">
    <property type="term" value="P:positive regulation of cell population proliferation"/>
    <property type="evidence" value="ECO:0000316"/>
    <property type="project" value="MGI"/>
</dbReference>
<dbReference type="GO" id="GO:0048146">
    <property type="term" value="P:positive regulation of fibroblast proliferation"/>
    <property type="evidence" value="ECO:0000266"/>
    <property type="project" value="MGI"/>
</dbReference>
<dbReference type="GO" id="GO:0032740">
    <property type="term" value="P:positive regulation of interleukin-17 production"/>
    <property type="evidence" value="ECO:0000250"/>
    <property type="project" value="UniProtKB"/>
</dbReference>
<dbReference type="GO" id="GO:0045931">
    <property type="term" value="P:positive regulation of mitotic cell cycle"/>
    <property type="evidence" value="ECO:0007669"/>
    <property type="project" value="Ensembl"/>
</dbReference>
<dbReference type="GO" id="GO:0045840">
    <property type="term" value="P:positive regulation of mitotic nuclear division"/>
    <property type="evidence" value="ECO:0000316"/>
    <property type="project" value="MGI"/>
</dbReference>
<dbReference type="GO" id="GO:0051092">
    <property type="term" value="P:positive regulation of NF-kappaB transcription factor activity"/>
    <property type="evidence" value="ECO:0000250"/>
    <property type="project" value="UniProtKB"/>
</dbReference>
<dbReference type="GO" id="GO:1901224">
    <property type="term" value="P:positive regulation of non-canonical NF-kappaB signal transduction"/>
    <property type="evidence" value="ECO:0000250"/>
    <property type="project" value="UniProtKB"/>
</dbReference>
<dbReference type="GO" id="GO:1900745">
    <property type="term" value="P:positive regulation of p38MAPK cascade"/>
    <property type="evidence" value="ECO:0000250"/>
    <property type="project" value="UniProtKB"/>
</dbReference>
<dbReference type="GO" id="GO:0031398">
    <property type="term" value="P:positive regulation of protein ubiquitination"/>
    <property type="evidence" value="ECO:0000250"/>
    <property type="project" value="UniProtKB"/>
</dbReference>
<dbReference type="GO" id="GO:0045987">
    <property type="term" value="P:positive regulation of smooth muscle contraction"/>
    <property type="evidence" value="ECO:0007669"/>
    <property type="project" value="Ensembl"/>
</dbReference>
<dbReference type="GO" id="GO:0006473">
    <property type="term" value="P:protein acetylation"/>
    <property type="evidence" value="ECO:0000315"/>
    <property type="project" value="UniProtKB"/>
</dbReference>
<dbReference type="GO" id="GO:0030100">
    <property type="term" value="P:regulation of endocytosis"/>
    <property type="evidence" value="ECO:0000315"/>
    <property type="project" value="UniProtKB"/>
</dbReference>
<dbReference type="GO" id="GO:1905364">
    <property type="term" value="P:regulation of endosomal vesicle fusion"/>
    <property type="evidence" value="ECO:0000315"/>
    <property type="project" value="UniProtKB"/>
</dbReference>
<dbReference type="GO" id="GO:0032651">
    <property type="term" value="P:regulation of interleukin-1 beta production"/>
    <property type="evidence" value="ECO:0000315"/>
    <property type="project" value="MGI"/>
</dbReference>
<dbReference type="GO" id="GO:1903978">
    <property type="term" value="P:regulation of microglial cell activation"/>
    <property type="evidence" value="ECO:0000315"/>
    <property type="project" value="UniProtKB"/>
</dbReference>
<dbReference type="GO" id="GO:0150077">
    <property type="term" value="P:regulation of neuroinflammatory response"/>
    <property type="evidence" value="ECO:0000315"/>
    <property type="project" value="UniProtKB"/>
</dbReference>
<dbReference type="GO" id="GO:0050764">
    <property type="term" value="P:regulation of phagocytosis"/>
    <property type="evidence" value="ECO:0000315"/>
    <property type="project" value="UniProtKB"/>
</dbReference>
<dbReference type="GO" id="GO:0010803">
    <property type="term" value="P:regulation of tumor necrosis factor-mediated signaling pathway"/>
    <property type="evidence" value="ECO:0000250"/>
    <property type="project" value="UniProtKB"/>
</dbReference>
<dbReference type="GO" id="GO:0034612">
    <property type="term" value="P:response to tumor necrosis factor"/>
    <property type="evidence" value="ECO:0000250"/>
    <property type="project" value="UniProtKB"/>
</dbReference>
<dbReference type="GO" id="GO:0090520">
    <property type="term" value="P:sphingolipid mediated signaling pathway"/>
    <property type="evidence" value="ECO:0000314"/>
    <property type="project" value="MGI"/>
</dbReference>
<dbReference type="GO" id="GO:0046512">
    <property type="term" value="P:sphingosine biosynthetic process"/>
    <property type="evidence" value="ECO:0007669"/>
    <property type="project" value="Ensembl"/>
</dbReference>
<dbReference type="GO" id="GO:0006670">
    <property type="term" value="P:sphingosine metabolic process"/>
    <property type="evidence" value="ECO:0000250"/>
    <property type="project" value="UniProtKB"/>
</dbReference>
<dbReference type="FunFam" id="2.60.200.40:FF:000010">
    <property type="entry name" value="Sphingosine kinase 1"/>
    <property type="match status" value="1"/>
</dbReference>
<dbReference type="FunFam" id="3.40.50.10330:FF:000005">
    <property type="entry name" value="Sphingosine kinase 2"/>
    <property type="match status" value="1"/>
</dbReference>
<dbReference type="Gene3D" id="2.60.200.40">
    <property type="match status" value="1"/>
</dbReference>
<dbReference type="Gene3D" id="3.40.50.10330">
    <property type="entry name" value="Probable inorganic polyphosphate/atp-NAD kinase, domain 1"/>
    <property type="match status" value="1"/>
</dbReference>
<dbReference type="InterPro" id="IPR017438">
    <property type="entry name" value="ATP-NAD_kinase_N"/>
</dbReference>
<dbReference type="InterPro" id="IPR001206">
    <property type="entry name" value="Diacylglycerol_kinase_cat_dom"/>
</dbReference>
<dbReference type="InterPro" id="IPR050187">
    <property type="entry name" value="Lipid_Phosphate_FormReg"/>
</dbReference>
<dbReference type="InterPro" id="IPR016064">
    <property type="entry name" value="NAD/diacylglycerol_kinase_sf"/>
</dbReference>
<dbReference type="PANTHER" id="PTHR12358">
    <property type="entry name" value="SPHINGOSINE KINASE"/>
    <property type="match status" value="1"/>
</dbReference>
<dbReference type="PANTHER" id="PTHR12358:SF47">
    <property type="entry name" value="SPHINGOSINE KINASE 1"/>
    <property type="match status" value="1"/>
</dbReference>
<dbReference type="Pfam" id="PF00781">
    <property type="entry name" value="DAGK_cat"/>
    <property type="match status" value="1"/>
</dbReference>
<dbReference type="SMART" id="SM00046">
    <property type="entry name" value="DAGKc"/>
    <property type="match status" value="1"/>
</dbReference>
<dbReference type="SUPFAM" id="SSF111331">
    <property type="entry name" value="NAD kinase/diacylglycerol kinase-like"/>
    <property type="match status" value="1"/>
</dbReference>
<dbReference type="PROSITE" id="PS50146">
    <property type="entry name" value="DAGK"/>
    <property type="match status" value="1"/>
</dbReference>
<name>SPHK1_MOUSE</name>
<gene>
    <name evidence="23" type="primary">Sphk1</name>
    <name evidence="17" type="synonym">Sk1</name>
</gene>
<keyword id="KW-0025">Alternative splicing</keyword>
<keyword id="KW-0067">ATP-binding</keyword>
<keyword id="KW-0112">Calmodulin-binding</keyword>
<keyword id="KW-1003">Cell membrane</keyword>
<keyword id="KW-0963">Cytoplasm</keyword>
<keyword id="KW-0967">Endosome</keyword>
<keyword id="KW-0418">Kinase</keyword>
<keyword id="KW-0443">Lipid metabolism</keyword>
<keyword id="KW-0472">Membrane</keyword>
<keyword id="KW-0547">Nucleotide-binding</keyword>
<keyword id="KW-0539">Nucleus</keyword>
<keyword id="KW-0597">Phosphoprotein</keyword>
<keyword id="KW-1185">Reference proteome</keyword>
<keyword id="KW-0770">Synapse</keyword>
<keyword id="KW-0808">Transferase</keyword>